<comment type="function">
    <text evidence="1">Vasoconstrictor. May target bradykinin receptors (BDKRB).</text>
</comment>
<comment type="subcellular location">
    <subcellularLocation>
        <location evidence="1">Secreted</location>
    </subcellularLocation>
</comment>
<comment type="tissue specificity">
    <text evidence="1">Expressed by the skin glands.</text>
</comment>
<comment type="mass spectrometry"/>
<comment type="similarity">
    <text evidence="3">Belongs to the bradykinin-related peptide family.</text>
</comment>
<feature type="peptide" id="PRO_0000391418" description="Bradykinin-related peptide Pnor-5" evidence="1">
    <location>
        <begin position="1"/>
        <end position="8"/>
    </location>
</feature>
<keyword id="KW-0878">Amphibian defense peptide</keyword>
<keyword id="KW-1222">Bradykinin receptor impairing toxin</keyword>
<keyword id="KW-0903">Direct protein sequencing</keyword>
<keyword id="KW-1213">G-protein coupled receptor impairing toxin</keyword>
<keyword id="KW-0964">Secreted</keyword>
<keyword id="KW-0800">Toxin</keyword>
<keyword id="KW-0838">Vasoactive</keyword>
<keyword id="KW-0839">Vasoconstrictor</keyword>
<dbReference type="GO" id="GO:0005576">
    <property type="term" value="C:extracellular region"/>
    <property type="evidence" value="ECO:0007669"/>
    <property type="project" value="UniProtKB-SubCell"/>
</dbReference>
<dbReference type="GO" id="GO:0090729">
    <property type="term" value="F:toxin activity"/>
    <property type="evidence" value="ECO:0007669"/>
    <property type="project" value="UniProtKB-KW"/>
</dbReference>
<dbReference type="GO" id="GO:0006952">
    <property type="term" value="P:defense response"/>
    <property type="evidence" value="ECO:0007669"/>
    <property type="project" value="UniProtKB-KW"/>
</dbReference>
<dbReference type="GO" id="GO:0042310">
    <property type="term" value="P:vasoconstriction"/>
    <property type="evidence" value="ECO:0007669"/>
    <property type="project" value="UniProtKB-KW"/>
</dbReference>
<proteinExistence type="evidence at protein level"/>
<accession>P86426</accession>
<protein>
    <recommendedName>
        <fullName evidence="2">Bradykinin-related peptide Pnor-5</fullName>
    </recommendedName>
</protein>
<name>BRK5_PITNO</name>
<organism>
    <name type="scientific">Pithecopus nordestinus</name>
    <name type="common">Northeastern Brazilian leaf frog</name>
    <name type="synonym">Phyllomedusa nordestina</name>
    <dbReference type="NCBI Taxonomy" id="2034992"/>
    <lineage>
        <taxon>Eukaryota</taxon>
        <taxon>Metazoa</taxon>
        <taxon>Chordata</taxon>
        <taxon>Craniata</taxon>
        <taxon>Vertebrata</taxon>
        <taxon>Euteleostomi</taxon>
        <taxon>Amphibia</taxon>
        <taxon>Batrachia</taxon>
        <taxon>Anura</taxon>
        <taxon>Neobatrachia</taxon>
        <taxon>Hyloidea</taxon>
        <taxon>Hylidae</taxon>
        <taxon>Phyllomedusinae</taxon>
        <taxon>Pithecopus</taxon>
    </lineage>
</organism>
<sequence>RPLSWLPK</sequence>
<evidence type="ECO:0000269" key="1">
    <source ref="1"/>
</evidence>
<evidence type="ECO:0000303" key="2">
    <source ref="1"/>
</evidence>
<evidence type="ECO:0000305" key="3"/>
<reference evidence="3" key="1">
    <citation type="journal article" date="2009" name="J. Venom. Anim. Toxins Incl. Trop. Dis.">
        <title>Identification of bradykinin-related peptides from Phyllomedusa nordestina skin secretion using electrospray ionization tandem mass spectrometry after a single-step liquid chromatography.</title>
        <authorList>
            <person name="Conceicao K."/>
            <person name="Bruni F.M."/>
            <person name="Sciano J.M."/>
            <person name="Konno K."/>
            <person name="Melo R.L."/>
            <person name="Antoniazzi M.M."/>
            <person name="Jared C."/>
            <person name="Lopes-Ferreira M."/>
            <person name="Pimenta D.C."/>
        </authorList>
    </citation>
    <scope>PROTEIN SEQUENCE</scope>
    <scope>FUNCTION</scope>
    <scope>SUBCELLULAR LOCATION</scope>
    <scope>TISSUE SPECIFICITY</scope>
    <scope>MASS SPECTROMETRY</scope>
    <source>
        <tissue evidence="1">Skin secretion</tissue>
    </source>
</reference>